<accession>Q5X5X3</accession>
<feature type="chain" id="PRO_0000142014" description="1-(5-phosphoribosyl)-5-[(5-phosphoribosylamino)methylideneamino] imidazole-4-carboxamide isomerase">
    <location>
        <begin position="1"/>
        <end position="239"/>
    </location>
</feature>
<feature type="active site" description="Proton acceptor" evidence="1">
    <location>
        <position position="8"/>
    </location>
</feature>
<feature type="active site" description="Proton donor" evidence="1">
    <location>
        <position position="129"/>
    </location>
</feature>
<reference key="1">
    <citation type="journal article" date="2004" name="Nat. Genet.">
        <title>Evidence in the Legionella pneumophila genome for exploitation of host cell functions and high genome plasticity.</title>
        <authorList>
            <person name="Cazalet C."/>
            <person name="Rusniok C."/>
            <person name="Brueggemann H."/>
            <person name="Zidane N."/>
            <person name="Magnier A."/>
            <person name="Ma L."/>
            <person name="Tichit M."/>
            <person name="Jarraud S."/>
            <person name="Bouchier C."/>
            <person name="Vandenesch F."/>
            <person name="Kunst F."/>
            <person name="Etienne J."/>
            <person name="Glaser P."/>
            <person name="Buchrieser C."/>
        </authorList>
    </citation>
    <scope>NUCLEOTIDE SEQUENCE [LARGE SCALE GENOMIC DNA]</scope>
    <source>
        <strain>Paris</strain>
    </source>
</reference>
<dbReference type="EC" id="5.3.1.16" evidence="1"/>
<dbReference type="EMBL" id="CR628336">
    <property type="protein sequence ID" value="CAH12348.1"/>
    <property type="molecule type" value="Genomic_DNA"/>
</dbReference>
<dbReference type="RefSeq" id="WP_011213548.1">
    <property type="nucleotide sequence ID" value="NC_006368.1"/>
</dbReference>
<dbReference type="SMR" id="Q5X5X3"/>
<dbReference type="KEGG" id="lpp:lpp1197"/>
<dbReference type="LegioList" id="lpp1197"/>
<dbReference type="HOGENOM" id="CLU_048577_1_2_6"/>
<dbReference type="UniPathway" id="UPA00031">
    <property type="reaction ID" value="UER00009"/>
</dbReference>
<dbReference type="GO" id="GO:0005737">
    <property type="term" value="C:cytoplasm"/>
    <property type="evidence" value="ECO:0007669"/>
    <property type="project" value="UniProtKB-SubCell"/>
</dbReference>
<dbReference type="GO" id="GO:0003949">
    <property type="term" value="F:1-(5-phosphoribosyl)-5-[(5-phosphoribosylamino)methylideneamino]imidazole-4-carboxamide isomerase activity"/>
    <property type="evidence" value="ECO:0007669"/>
    <property type="project" value="UniProtKB-UniRule"/>
</dbReference>
<dbReference type="GO" id="GO:0000105">
    <property type="term" value="P:L-histidine biosynthetic process"/>
    <property type="evidence" value="ECO:0007669"/>
    <property type="project" value="UniProtKB-UniRule"/>
</dbReference>
<dbReference type="GO" id="GO:0000162">
    <property type="term" value="P:L-tryptophan biosynthetic process"/>
    <property type="evidence" value="ECO:0007669"/>
    <property type="project" value="TreeGrafter"/>
</dbReference>
<dbReference type="CDD" id="cd04732">
    <property type="entry name" value="HisA"/>
    <property type="match status" value="1"/>
</dbReference>
<dbReference type="FunFam" id="3.20.20.70:FF:000009">
    <property type="entry name" value="1-(5-phosphoribosyl)-5-[(5-phosphoribosylamino)methylideneamino] imidazole-4-carboxamide isomerase"/>
    <property type="match status" value="1"/>
</dbReference>
<dbReference type="Gene3D" id="3.20.20.70">
    <property type="entry name" value="Aldolase class I"/>
    <property type="match status" value="1"/>
</dbReference>
<dbReference type="HAMAP" id="MF_01014">
    <property type="entry name" value="HisA"/>
    <property type="match status" value="1"/>
</dbReference>
<dbReference type="InterPro" id="IPR013785">
    <property type="entry name" value="Aldolase_TIM"/>
</dbReference>
<dbReference type="InterPro" id="IPR006062">
    <property type="entry name" value="His_biosynth"/>
</dbReference>
<dbReference type="InterPro" id="IPR006063">
    <property type="entry name" value="HisA_bact_arch"/>
</dbReference>
<dbReference type="InterPro" id="IPR044524">
    <property type="entry name" value="Isoase_HisA-like"/>
</dbReference>
<dbReference type="InterPro" id="IPR023016">
    <property type="entry name" value="Isoase_HisA-like_bact"/>
</dbReference>
<dbReference type="InterPro" id="IPR011060">
    <property type="entry name" value="RibuloseP-bd_barrel"/>
</dbReference>
<dbReference type="NCBIfam" id="TIGR00007">
    <property type="entry name" value="1-(5-phosphoribosyl)-5-[(5-phosphoribosylamino)methylideneamino]imidazole-4-carboxamide isomerase"/>
    <property type="match status" value="1"/>
</dbReference>
<dbReference type="PANTHER" id="PTHR43090">
    <property type="entry name" value="1-(5-PHOSPHORIBOSYL)-5-[(5-PHOSPHORIBOSYLAMINO)METHYLIDENEAMINO] IMIDAZOLE-4-CARBOXAMIDE ISOMERASE"/>
    <property type="match status" value="1"/>
</dbReference>
<dbReference type="PANTHER" id="PTHR43090:SF2">
    <property type="entry name" value="1-(5-PHOSPHORIBOSYL)-5-[(5-PHOSPHORIBOSYLAMINO)METHYLIDENEAMINO] IMIDAZOLE-4-CARBOXAMIDE ISOMERASE"/>
    <property type="match status" value="1"/>
</dbReference>
<dbReference type="Pfam" id="PF00977">
    <property type="entry name" value="His_biosynth"/>
    <property type="match status" value="1"/>
</dbReference>
<dbReference type="SUPFAM" id="SSF51366">
    <property type="entry name" value="Ribulose-phoshate binding barrel"/>
    <property type="match status" value="1"/>
</dbReference>
<comment type="catalytic activity">
    <reaction evidence="1">
        <text>1-(5-phospho-beta-D-ribosyl)-5-[(5-phospho-beta-D-ribosylamino)methylideneamino]imidazole-4-carboxamide = 5-[(5-phospho-1-deoxy-D-ribulos-1-ylimino)methylamino]-1-(5-phospho-beta-D-ribosyl)imidazole-4-carboxamide</text>
        <dbReference type="Rhea" id="RHEA:15469"/>
        <dbReference type="ChEBI" id="CHEBI:58435"/>
        <dbReference type="ChEBI" id="CHEBI:58525"/>
        <dbReference type="EC" id="5.3.1.16"/>
    </reaction>
</comment>
<comment type="pathway">
    <text evidence="1">Amino-acid biosynthesis; L-histidine biosynthesis; L-histidine from 5-phospho-alpha-D-ribose 1-diphosphate: step 4/9.</text>
</comment>
<comment type="subcellular location">
    <subcellularLocation>
        <location evidence="1">Cytoplasm</location>
    </subcellularLocation>
</comment>
<comment type="similarity">
    <text evidence="1">Belongs to the HisA/HisF family.</text>
</comment>
<keyword id="KW-0028">Amino-acid biosynthesis</keyword>
<keyword id="KW-0963">Cytoplasm</keyword>
<keyword id="KW-0368">Histidine biosynthesis</keyword>
<keyword id="KW-0413">Isomerase</keyword>
<organism>
    <name type="scientific">Legionella pneumophila (strain Paris)</name>
    <dbReference type="NCBI Taxonomy" id="297246"/>
    <lineage>
        <taxon>Bacteria</taxon>
        <taxon>Pseudomonadati</taxon>
        <taxon>Pseudomonadota</taxon>
        <taxon>Gammaproteobacteria</taxon>
        <taxon>Legionellales</taxon>
        <taxon>Legionellaceae</taxon>
        <taxon>Legionella</taxon>
    </lineage>
</organism>
<gene>
    <name evidence="1" type="primary">hisA</name>
    <name type="ordered locus">lpp1197</name>
</gene>
<evidence type="ECO:0000255" key="1">
    <source>
        <dbReference type="HAMAP-Rule" id="MF_01014"/>
    </source>
</evidence>
<sequence>MLVIPAIDLQSGRCVRLKQGRFDQVTQFSVFPIERALHFAKLGAKRLHVVDLDGARSGKMQQLELICSMQKTGIPIQAGGGIRSIEQALECSNAGISQLVIGSLAITNPDLTIQIIEKIKPENIVLALDVRVDTKVPLLAINGWQNNSTSSLWEVVSYYENYGIKNILCTDIACDGMMNGPNFDLYQQAVEYFPQIAWQASGGVRHMQDITTLNSLGISAVILGLMLYQDNVNFEELLC</sequence>
<proteinExistence type="inferred from homology"/>
<protein>
    <recommendedName>
        <fullName evidence="1">1-(5-phosphoribosyl)-5-[(5-phosphoribosylamino)methylideneamino] imidazole-4-carboxamide isomerase</fullName>
        <ecNumber evidence="1">5.3.1.16</ecNumber>
    </recommendedName>
    <alternativeName>
        <fullName evidence="1">Phosphoribosylformimino-5-aminoimidazole carboxamide ribotide isomerase</fullName>
    </alternativeName>
</protein>
<name>HIS4_LEGPA</name>